<dbReference type="EC" id="2.3.2.27" evidence="2"/>
<dbReference type="EMBL" id="BC104611">
    <property type="protein sequence ID" value="AAI04612.1"/>
    <property type="molecule type" value="mRNA"/>
</dbReference>
<dbReference type="RefSeq" id="NP_001030499.1">
    <property type="nucleotide sequence ID" value="NM_001035422.1"/>
</dbReference>
<dbReference type="SMR" id="Q3SWY0"/>
<dbReference type="FunCoup" id="Q3SWY0">
    <property type="interactions" value="16"/>
</dbReference>
<dbReference type="STRING" id="9913.ENSBTAP00000064416"/>
<dbReference type="PaxDb" id="9913-ENSBTAP00000006005"/>
<dbReference type="Ensembl" id="ENSBTAT00000072865.2">
    <property type="protein sequence ID" value="ENSBTAP00000064416.2"/>
    <property type="gene ID" value="ENSBTAG00000004572.4"/>
</dbReference>
<dbReference type="GeneID" id="539200"/>
<dbReference type="KEGG" id="bta:539200"/>
<dbReference type="CTD" id="138065"/>
<dbReference type="VGNC" id="VGNC:34041">
    <property type="gene designation" value="RNF183"/>
</dbReference>
<dbReference type="eggNOG" id="KOG2177">
    <property type="taxonomic scope" value="Eukaryota"/>
</dbReference>
<dbReference type="GeneTree" id="ENSGT00940000162965"/>
<dbReference type="HOGENOM" id="CLU_122905_0_0_1"/>
<dbReference type="InParanoid" id="Q3SWY0"/>
<dbReference type="OrthoDB" id="252722at2759"/>
<dbReference type="TreeFam" id="TF337102"/>
<dbReference type="UniPathway" id="UPA00143"/>
<dbReference type="Proteomes" id="UP000009136">
    <property type="component" value="Chromosome 8"/>
</dbReference>
<dbReference type="GO" id="GO:0033106">
    <property type="term" value="C:cis-Golgi network membrane"/>
    <property type="evidence" value="ECO:0000250"/>
    <property type="project" value="UniProtKB"/>
</dbReference>
<dbReference type="GO" id="GO:0005789">
    <property type="term" value="C:endoplasmic reticulum membrane"/>
    <property type="evidence" value="ECO:0000250"/>
    <property type="project" value="UniProtKB"/>
</dbReference>
<dbReference type="GO" id="GO:0005765">
    <property type="term" value="C:lysosomal membrane"/>
    <property type="evidence" value="ECO:0000250"/>
    <property type="project" value="UniProtKB"/>
</dbReference>
<dbReference type="GO" id="GO:0061630">
    <property type="term" value="F:ubiquitin protein ligase activity"/>
    <property type="evidence" value="ECO:0000250"/>
    <property type="project" value="UniProtKB"/>
</dbReference>
<dbReference type="GO" id="GO:0008270">
    <property type="term" value="F:zinc ion binding"/>
    <property type="evidence" value="ECO:0007669"/>
    <property type="project" value="UniProtKB-KW"/>
</dbReference>
<dbReference type="GO" id="GO:0006915">
    <property type="term" value="P:apoptotic process"/>
    <property type="evidence" value="ECO:0007669"/>
    <property type="project" value="UniProtKB-KW"/>
</dbReference>
<dbReference type="GO" id="GO:1902237">
    <property type="term" value="P:positive regulation of endoplasmic reticulum stress-induced intrinsic apoptotic signaling pathway"/>
    <property type="evidence" value="ECO:0000250"/>
    <property type="project" value="UniProtKB"/>
</dbReference>
<dbReference type="GO" id="GO:0051865">
    <property type="term" value="P:protein autoubiquitination"/>
    <property type="evidence" value="ECO:0000250"/>
    <property type="project" value="UniProtKB"/>
</dbReference>
<dbReference type="GO" id="GO:0000209">
    <property type="term" value="P:protein polyubiquitination"/>
    <property type="evidence" value="ECO:0000250"/>
    <property type="project" value="UniProtKB"/>
</dbReference>
<dbReference type="GO" id="GO:0016567">
    <property type="term" value="P:protein ubiquitination"/>
    <property type="evidence" value="ECO:0000318"/>
    <property type="project" value="GO_Central"/>
</dbReference>
<dbReference type="GO" id="GO:0034976">
    <property type="term" value="P:response to endoplasmic reticulum stress"/>
    <property type="evidence" value="ECO:0000250"/>
    <property type="project" value="UniProtKB"/>
</dbReference>
<dbReference type="CDD" id="cd16556">
    <property type="entry name" value="RING-HC_RNF183-like"/>
    <property type="match status" value="1"/>
</dbReference>
<dbReference type="FunFam" id="3.30.40.10:FF:000409">
    <property type="entry name" value="probable E3 ubiquitin-protein ligase RNF183"/>
    <property type="match status" value="1"/>
</dbReference>
<dbReference type="Gene3D" id="3.30.40.10">
    <property type="entry name" value="Zinc/RING finger domain, C3HC4 (zinc finger)"/>
    <property type="match status" value="1"/>
</dbReference>
<dbReference type="InterPro" id="IPR051435">
    <property type="entry name" value="RING_finger_E3_ubiq-ligases"/>
</dbReference>
<dbReference type="InterPro" id="IPR001841">
    <property type="entry name" value="Znf_RING"/>
</dbReference>
<dbReference type="InterPro" id="IPR013083">
    <property type="entry name" value="Znf_RING/FYVE/PHD"/>
</dbReference>
<dbReference type="InterPro" id="IPR017907">
    <property type="entry name" value="Znf_RING_CS"/>
</dbReference>
<dbReference type="PANTHER" id="PTHR22791:SF7">
    <property type="entry name" value="E3 UBIQUITIN-PROTEIN LIGASE RNF183"/>
    <property type="match status" value="1"/>
</dbReference>
<dbReference type="PANTHER" id="PTHR22791">
    <property type="entry name" value="RING-TYPE DOMAIN-CONTAINING PROTEIN"/>
    <property type="match status" value="1"/>
</dbReference>
<dbReference type="Pfam" id="PF13639">
    <property type="entry name" value="zf-RING_2"/>
    <property type="match status" value="1"/>
</dbReference>
<dbReference type="SMART" id="SM00184">
    <property type="entry name" value="RING"/>
    <property type="match status" value="1"/>
</dbReference>
<dbReference type="SUPFAM" id="SSF57850">
    <property type="entry name" value="RING/U-box"/>
    <property type="match status" value="1"/>
</dbReference>
<dbReference type="PROSITE" id="PS00518">
    <property type="entry name" value="ZF_RING_1"/>
    <property type="match status" value="1"/>
</dbReference>
<dbReference type="PROSITE" id="PS50089">
    <property type="entry name" value="ZF_RING_2"/>
    <property type="match status" value="1"/>
</dbReference>
<feature type="chain" id="PRO_0000247357" description="E3 ubiquitin-protein ligase RNF183">
    <location>
        <begin position="1"/>
        <end position="188"/>
    </location>
</feature>
<feature type="topological domain" description="Cytoplasmic" evidence="5">
    <location>
        <begin position="1"/>
        <end position="157"/>
    </location>
</feature>
<feature type="transmembrane region" description="Helical; Anchor for type IV membrane protein" evidence="3">
    <location>
        <begin position="158"/>
        <end position="178"/>
    </location>
</feature>
<feature type="topological domain" description="Lumenal" evidence="5">
    <location>
        <begin position="179"/>
        <end position="188"/>
    </location>
</feature>
<feature type="zinc finger region" description="RING-type" evidence="4">
    <location>
        <begin position="11"/>
        <end position="58"/>
    </location>
</feature>
<comment type="function">
    <text evidence="2">Acts as an E3 ubiquitin ligase catalyzing the covalent attachment of ubiquitin moieties onto substrate proteins. Triggers apoptosis in response to prolonged ER stress by mediating the polyubiquitination and subsequent proteasomal degradation of BCL2L1. May collaborate with FATE1 to restrain BIK protein levels thus regulating apoptotic signaling.</text>
</comment>
<comment type="catalytic activity">
    <reaction evidence="2">
        <text>S-ubiquitinyl-[E2 ubiquitin-conjugating enzyme]-L-cysteine + [acceptor protein]-L-lysine = [E2 ubiquitin-conjugating enzyme]-L-cysteine + N(6)-ubiquitinyl-[acceptor protein]-L-lysine.</text>
        <dbReference type="EC" id="2.3.2.27"/>
    </reaction>
</comment>
<comment type="pathway">
    <text>Protein modification; protein ubiquitination.</text>
</comment>
<comment type="subunit">
    <text evidence="1 2">Interacts with FATE1. Interacts with SEC16A. Interacts with BCL2L1.</text>
</comment>
<comment type="subcellular location">
    <subcellularLocation>
        <location evidence="5">Endoplasmic reticulum membrane</location>
        <topology evidence="5">Single-pass type IV membrane protein</topology>
    </subcellularLocation>
    <subcellularLocation>
        <location evidence="2">Endoplasmic reticulum</location>
    </subcellularLocation>
    <subcellularLocation>
        <location evidence="1">Golgi apparatus</location>
        <location evidence="1">cis-Golgi network membrane</location>
    </subcellularLocation>
    <subcellularLocation>
        <location evidence="1">Lysosome</location>
    </subcellularLocation>
</comment>
<comment type="PTM">
    <text evidence="2">Autoubiquitinated (in vitro).</text>
</comment>
<evidence type="ECO:0000250" key="1">
    <source>
        <dbReference type="UniProtKB" id="Q8QZS5"/>
    </source>
</evidence>
<evidence type="ECO:0000250" key="2">
    <source>
        <dbReference type="UniProtKB" id="Q96D59"/>
    </source>
</evidence>
<evidence type="ECO:0000255" key="3"/>
<evidence type="ECO:0000255" key="4">
    <source>
        <dbReference type="PROSITE-ProRule" id="PRU00175"/>
    </source>
</evidence>
<evidence type="ECO:0000305" key="5"/>
<name>RN183_BOVIN</name>
<sequence length="188" mass="21492">MAEQQGREPECPVCWNPFNNTFHTPKVLDCCHSFCVECLAHISLVTPTRRRLLCPLCRHPTVLASGQPVTDLPTDTAVLTLLRLEPHHVILEGHQLCLKDQPKSRYFLRQPRVYTLDLGPEPASQAGQPQDVGPSTRPVPIRSRYSLRECFRNPHFRIFAYMMAVILCGTVLFIFSIFCTRRFFWGVG</sequence>
<organism>
    <name type="scientific">Bos taurus</name>
    <name type="common">Bovine</name>
    <dbReference type="NCBI Taxonomy" id="9913"/>
    <lineage>
        <taxon>Eukaryota</taxon>
        <taxon>Metazoa</taxon>
        <taxon>Chordata</taxon>
        <taxon>Craniata</taxon>
        <taxon>Vertebrata</taxon>
        <taxon>Euteleostomi</taxon>
        <taxon>Mammalia</taxon>
        <taxon>Eutheria</taxon>
        <taxon>Laurasiatheria</taxon>
        <taxon>Artiodactyla</taxon>
        <taxon>Ruminantia</taxon>
        <taxon>Pecora</taxon>
        <taxon>Bovidae</taxon>
        <taxon>Bovinae</taxon>
        <taxon>Bos</taxon>
    </lineage>
</organism>
<reference key="1">
    <citation type="submission" date="2005-09" db="EMBL/GenBank/DDBJ databases">
        <authorList>
            <consortium name="NIH - Mammalian Gene Collection (MGC) project"/>
        </authorList>
    </citation>
    <scope>NUCLEOTIDE SEQUENCE [LARGE SCALE MRNA]</scope>
    <source>
        <strain>Hereford</strain>
        <tissue>Uterus</tissue>
    </source>
</reference>
<protein>
    <recommendedName>
        <fullName>E3 ubiquitin-protein ligase RNF183</fullName>
        <ecNumber evidence="2">2.3.2.27</ecNumber>
    </recommendedName>
</protein>
<proteinExistence type="evidence at transcript level"/>
<gene>
    <name type="primary">RNF183</name>
</gene>
<accession>Q3SWY0</accession>
<keyword id="KW-0053">Apoptosis</keyword>
<keyword id="KW-0256">Endoplasmic reticulum</keyword>
<keyword id="KW-0333">Golgi apparatus</keyword>
<keyword id="KW-0458">Lysosome</keyword>
<keyword id="KW-0472">Membrane</keyword>
<keyword id="KW-0479">Metal-binding</keyword>
<keyword id="KW-1185">Reference proteome</keyword>
<keyword id="KW-0808">Transferase</keyword>
<keyword id="KW-0812">Transmembrane</keyword>
<keyword id="KW-1133">Transmembrane helix</keyword>
<keyword id="KW-0832">Ubl conjugation</keyword>
<keyword id="KW-0833">Ubl conjugation pathway</keyword>
<keyword id="KW-0862">Zinc</keyword>
<keyword id="KW-0863">Zinc-finger</keyword>